<gene>
    <name evidence="1" type="primary">gpsA</name>
    <name type="ordered locus">Pnuc_1944</name>
</gene>
<proteinExistence type="inferred from homology"/>
<protein>
    <recommendedName>
        <fullName evidence="1">Glycerol-3-phosphate dehydrogenase [NAD(P)+]</fullName>
        <ecNumber evidence="1">1.1.1.94</ecNumber>
    </recommendedName>
    <alternativeName>
        <fullName evidence="1">NAD(P)(+)-dependent glycerol-3-phosphate dehydrogenase</fullName>
    </alternativeName>
    <alternativeName>
        <fullName evidence="1">NAD(P)H-dependent dihydroxyacetone-phosphate reductase</fullName>
    </alternativeName>
</protein>
<accession>A4T092</accession>
<comment type="function">
    <text evidence="1">Catalyzes the reduction of the glycolytic intermediate dihydroxyacetone phosphate (DHAP) to sn-glycerol 3-phosphate (G3P), the key precursor for phospholipid synthesis.</text>
</comment>
<comment type="catalytic activity">
    <reaction evidence="1">
        <text>sn-glycerol 3-phosphate + NAD(+) = dihydroxyacetone phosphate + NADH + H(+)</text>
        <dbReference type="Rhea" id="RHEA:11092"/>
        <dbReference type="ChEBI" id="CHEBI:15378"/>
        <dbReference type="ChEBI" id="CHEBI:57540"/>
        <dbReference type="ChEBI" id="CHEBI:57597"/>
        <dbReference type="ChEBI" id="CHEBI:57642"/>
        <dbReference type="ChEBI" id="CHEBI:57945"/>
        <dbReference type="EC" id="1.1.1.94"/>
    </reaction>
    <physiologicalReaction direction="right-to-left" evidence="1">
        <dbReference type="Rhea" id="RHEA:11094"/>
    </physiologicalReaction>
</comment>
<comment type="catalytic activity">
    <reaction evidence="1">
        <text>sn-glycerol 3-phosphate + NADP(+) = dihydroxyacetone phosphate + NADPH + H(+)</text>
        <dbReference type="Rhea" id="RHEA:11096"/>
        <dbReference type="ChEBI" id="CHEBI:15378"/>
        <dbReference type="ChEBI" id="CHEBI:57597"/>
        <dbReference type="ChEBI" id="CHEBI:57642"/>
        <dbReference type="ChEBI" id="CHEBI:57783"/>
        <dbReference type="ChEBI" id="CHEBI:58349"/>
        <dbReference type="EC" id="1.1.1.94"/>
    </reaction>
    <physiologicalReaction direction="right-to-left" evidence="1">
        <dbReference type="Rhea" id="RHEA:11098"/>
    </physiologicalReaction>
</comment>
<comment type="pathway">
    <text evidence="1">Membrane lipid metabolism; glycerophospholipid metabolism.</text>
</comment>
<comment type="subcellular location">
    <subcellularLocation>
        <location evidence="1">Cytoplasm</location>
    </subcellularLocation>
</comment>
<comment type="similarity">
    <text evidence="1">Belongs to the NAD-dependent glycerol-3-phosphate dehydrogenase family.</text>
</comment>
<name>GPDA_POLAQ</name>
<evidence type="ECO:0000255" key="1">
    <source>
        <dbReference type="HAMAP-Rule" id="MF_00394"/>
    </source>
</evidence>
<feature type="chain" id="PRO_1000080311" description="Glycerol-3-phosphate dehydrogenase [NAD(P)+]">
    <location>
        <begin position="1"/>
        <end position="340"/>
    </location>
</feature>
<feature type="active site" description="Proton acceptor" evidence="1">
    <location>
        <position position="199"/>
    </location>
</feature>
<feature type="binding site" evidence="1">
    <location>
        <position position="11"/>
    </location>
    <ligand>
        <name>NADPH</name>
        <dbReference type="ChEBI" id="CHEBI:57783"/>
    </ligand>
</feature>
<feature type="binding site" evidence="1">
    <location>
        <position position="33"/>
    </location>
    <ligand>
        <name>NADPH</name>
        <dbReference type="ChEBI" id="CHEBI:57783"/>
    </ligand>
</feature>
<feature type="binding site" evidence="1">
    <location>
        <position position="110"/>
    </location>
    <ligand>
        <name>NADPH</name>
        <dbReference type="ChEBI" id="CHEBI:57783"/>
    </ligand>
</feature>
<feature type="binding site" evidence="1">
    <location>
        <position position="110"/>
    </location>
    <ligand>
        <name>sn-glycerol 3-phosphate</name>
        <dbReference type="ChEBI" id="CHEBI:57597"/>
    </ligand>
</feature>
<feature type="binding site" evidence="1">
    <location>
        <position position="144"/>
    </location>
    <ligand>
        <name>sn-glycerol 3-phosphate</name>
        <dbReference type="ChEBI" id="CHEBI:57597"/>
    </ligand>
</feature>
<feature type="binding site" evidence="1">
    <location>
        <position position="146"/>
    </location>
    <ligand>
        <name>sn-glycerol 3-phosphate</name>
        <dbReference type="ChEBI" id="CHEBI:57597"/>
    </ligand>
</feature>
<feature type="binding site" evidence="1">
    <location>
        <position position="148"/>
    </location>
    <ligand>
        <name>NADPH</name>
        <dbReference type="ChEBI" id="CHEBI:57783"/>
    </ligand>
</feature>
<feature type="binding site" evidence="1">
    <location>
        <position position="199"/>
    </location>
    <ligand>
        <name>sn-glycerol 3-phosphate</name>
        <dbReference type="ChEBI" id="CHEBI:57597"/>
    </ligand>
</feature>
<feature type="binding site" evidence="1">
    <location>
        <position position="252"/>
    </location>
    <ligand>
        <name>sn-glycerol 3-phosphate</name>
        <dbReference type="ChEBI" id="CHEBI:57597"/>
    </ligand>
</feature>
<feature type="binding site" evidence="1">
    <location>
        <position position="262"/>
    </location>
    <ligand>
        <name>sn-glycerol 3-phosphate</name>
        <dbReference type="ChEBI" id="CHEBI:57597"/>
    </ligand>
</feature>
<feature type="binding site" evidence="1">
    <location>
        <position position="263"/>
    </location>
    <ligand>
        <name>NADPH</name>
        <dbReference type="ChEBI" id="CHEBI:57783"/>
    </ligand>
</feature>
<feature type="binding site" evidence="1">
    <location>
        <position position="263"/>
    </location>
    <ligand>
        <name>sn-glycerol 3-phosphate</name>
        <dbReference type="ChEBI" id="CHEBI:57597"/>
    </ligand>
</feature>
<feature type="binding site" evidence="1">
    <location>
        <position position="264"/>
    </location>
    <ligand>
        <name>sn-glycerol 3-phosphate</name>
        <dbReference type="ChEBI" id="CHEBI:57597"/>
    </ligand>
</feature>
<feature type="binding site" evidence="1">
    <location>
        <position position="287"/>
    </location>
    <ligand>
        <name>NADPH</name>
        <dbReference type="ChEBI" id="CHEBI:57783"/>
    </ligand>
</feature>
<feature type="binding site" evidence="1">
    <location>
        <position position="289"/>
    </location>
    <ligand>
        <name>NADPH</name>
        <dbReference type="ChEBI" id="CHEBI:57783"/>
    </ligand>
</feature>
<keyword id="KW-0963">Cytoplasm</keyword>
<keyword id="KW-0444">Lipid biosynthesis</keyword>
<keyword id="KW-0443">Lipid metabolism</keyword>
<keyword id="KW-0520">NAD</keyword>
<keyword id="KW-0521">NADP</keyword>
<keyword id="KW-0547">Nucleotide-binding</keyword>
<keyword id="KW-0560">Oxidoreductase</keyword>
<keyword id="KW-0594">Phospholipid biosynthesis</keyword>
<keyword id="KW-1208">Phospholipid metabolism</keyword>
<keyword id="KW-1185">Reference proteome</keyword>
<organism>
    <name type="scientific">Polynucleobacter asymbioticus (strain DSM 18221 / CIP 109841 / QLW-P1DMWA-1)</name>
    <name type="common">Polynucleobacter necessarius subsp. asymbioticus</name>
    <dbReference type="NCBI Taxonomy" id="312153"/>
    <lineage>
        <taxon>Bacteria</taxon>
        <taxon>Pseudomonadati</taxon>
        <taxon>Pseudomonadota</taxon>
        <taxon>Betaproteobacteria</taxon>
        <taxon>Burkholderiales</taxon>
        <taxon>Burkholderiaceae</taxon>
        <taxon>Polynucleobacter</taxon>
    </lineage>
</organism>
<sequence>MKVTILGAGAWGTAIASQAARQQSAGDVSLWSRDPSQLLEIEKTGENQAYLPGIKLPKSIKLENDFSNAIQRLSSNDLLVIATPMSGLSQTIAQVLKLAKQPLNIIWLCKGLEPNTSLLPHQVVERENSLHNHGIKHAYGALSGPSFAHEVGAGMPCALTVASTSTSLCEIVQAAFHHGNMRIYSSDDLIGVELGGAVKNVLAIAAGIGDGLNLGLNARAAVLTRGLAEMMRLVKAVGGKSETCMGLTGVGDLILTATGDLSRNRRVGLELAAGKSLPEILANLGHVAEGVLCAAAVGDLAKRLDVEMPITAMMGDVLSGQLTPQDAVKKLMGRDPKIET</sequence>
<reference key="1">
    <citation type="journal article" date="2012" name="Stand. Genomic Sci.">
        <title>Complete genome sequence of Polynucleobacter necessarius subsp. asymbioticus type strain (QLW-P1DMWA-1(T)).</title>
        <authorList>
            <person name="Meincke L."/>
            <person name="Copeland A."/>
            <person name="Lapidus A."/>
            <person name="Lucas S."/>
            <person name="Berry K.W."/>
            <person name="Del Rio T.G."/>
            <person name="Hammon N."/>
            <person name="Dalin E."/>
            <person name="Tice H."/>
            <person name="Pitluck S."/>
            <person name="Richardson P."/>
            <person name="Bruce D."/>
            <person name="Goodwin L."/>
            <person name="Han C."/>
            <person name="Tapia R."/>
            <person name="Detter J.C."/>
            <person name="Schmutz J."/>
            <person name="Brettin T."/>
            <person name="Larimer F."/>
            <person name="Land M."/>
            <person name="Hauser L."/>
            <person name="Kyrpides N.C."/>
            <person name="Ivanova N."/>
            <person name="Goker M."/>
            <person name="Woyke T."/>
            <person name="Wu Q.L."/>
            <person name="Pockl M."/>
            <person name="Hahn M.W."/>
            <person name="Klenk H.P."/>
        </authorList>
    </citation>
    <scope>NUCLEOTIDE SEQUENCE [LARGE SCALE GENOMIC DNA]</scope>
    <source>
        <strain>DSM 18221 / CIP 109841 / QLW-P1DMWA-1</strain>
    </source>
</reference>
<dbReference type="EC" id="1.1.1.94" evidence="1"/>
<dbReference type="EMBL" id="CP000655">
    <property type="protein sequence ID" value="ABP35156.1"/>
    <property type="molecule type" value="Genomic_DNA"/>
</dbReference>
<dbReference type="RefSeq" id="WP_011903779.1">
    <property type="nucleotide sequence ID" value="NC_009379.1"/>
</dbReference>
<dbReference type="SMR" id="A4T092"/>
<dbReference type="GeneID" id="31482335"/>
<dbReference type="KEGG" id="pnu:Pnuc_1944"/>
<dbReference type="eggNOG" id="COG0240">
    <property type="taxonomic scope" value="Bacteria"/>
</dbReference>
<dbReference type="HOGENOM" id="CLU_033449_0_2_4"/>
<dbReference type="UniPathway" id="UPA00940"/>
<dbReference type="Proteomes" id="UP000000231">
    <property type="component" value="Chromosome"/>
</dbReference>
<dbReference type="GO" id="GO:0005829">
    <property type="term" value="C:cytosol"/>
    <property type="evidence" value="ECO:0007669"/>
    <property type="project" value="TreeGrafter"/>
</dbReference>
<dbReference type="GO" id="GO:0047952">
    <property type="term" value="F:glycerol-3-phosphate dehydrogenase [NAD(P)+] activity"/>
    <property type="evidence" value="ECO:0007669"/>
    <property type="project" value="UniProtKB-UniRule"/>
</dbReference>
<dbReference type="GO" id="GO:0051287">
    <property type="term" value="F:NAD binding"/>
    <property type="evidence" value="ECO:0007669"/>
    <property type="project" value="InterPro"/>
</dbReference>
<dbReference type="GO" id="GO:0005975">
    <property type="term" value="P:carbohydrate metabolic process"/>
    <property type="evidence" value="ECO:0007669"/>
    <property type="project" value="InterPro"/>
</dbReference>
<dbReference type="GO" id="GO:0046167">
    <property type="term" value="P:glycerol-3-phosphate biosynthetic process"/>
    <property type="evidence" value="ECO:0007669"/>
    <property type="project" value="UniProtKB-UniRule"/>
</dbReference>
<dbReference type="GO" id="GO:0046168">
    <property type="term" value="P:glycerol-3-phosphate catabolic process"/>
    <property type="evidence" value="ECO:0007669"/>
    <property type="project" value="InterPro"/>
</dbReference>
<dbReference type="GO" id="GO:0006650">
    <property type="term" value="P:glycerophospholipid metabolic process"/>
    <property type="evidence" value="ECO:0007669"/>
    <property type="project" value="UniProtKB-UniRule"/>
</dbReference>
<dbReference type="GO" id="GO:0008654">
    <property type="term" value="P:phospholipid biosynthetic process"/>
    <property type="evidence" value="ECO:0007669"/>
    <property type="project" value="UniProtKB-KW"/>
</dbReference>
<dbReference type="FunFam" id="1.10.1040.10:FF:000001">
    <property type="entry name" value="Glycerol-3-phosphate dehydrogenase [NAD(P)+]"/>
    <property type="match status" value="1"/>
</dbReference>
<dbReference type="FunFam" id="3.40.50.720:FF:000019">
    <property type="entry name" value="Glycerol-3-phosphate dehydrogenase [NAD(P)+]"/>
    <property type="match status" value="1"/>
</dbReference>
<dbReference type="Gene3D" id="1.10.1040.10">
    <property type="entry name" value="N-(1-d-carboxylethyl)-l-norvaline Dehydrogenase, domain 2"/>
    <property type="match status" value="1"/>
</dbReference>
<dbReference type="Gene3D" id="3.40.50.720">
    <property type="entry name" value="NAD(P)-binding Rossmann-like Domain"/>
    <property type="match status" value="1"/>
</dbReference>
<dbReference type="HAMAP" id="MF_00394">
    <property type="entry name" value="NAD_Glyc3P_dehydrog"/>
    <property type="match status" value="1"/>
</dbReference>
<dbReference type="InterPro" id="IPR008927">
    <property type="entry name" value="6-PGluconate_DH-like_C_sf"/>
</dbReference>
<dbReference type="InterPro" id="IPR013328">
    <property type="entry name" value="6PGD_dom2"/>
</dbReference>
<dbReference type="InterPro" id="IPR006168">
    <property type="entry name" value="G3P_DH_NAD-dep"/>
</dbReference>
<dbReference type="InterPro" id="IPR006109">
    <property type="entry name" value="G3P_DH_NAD-dep_C"/>
</dbReference>
<dbReference type="InterPro" id="IPR011128">
    <property type="entry name" value="G3P_DH_NAD-dep_N"/>
</dbReference>
<dbReference type="InterPro" id="IPR036291">
    <property type="entry name" value="NAD(P)-bd_dom_sf"/>
</dbReference>
<dbReference type="NCBIfam" id="NF000940">
    <property type="entry name" value="PRK00094.1-2"/>
    <property type="match status" value="1"/>
</dbReference>
<dbReference type="NCBIfam" id="NF000942">
    <property type="entry name" value="PRK00094.1-4"/>
    <property type="match status" value="1"/>
</dbReference>
<dbReference type="PANTHER" id="PTHR11728">
    <property type="entry name" value="GLYCEROL-3-PHOSPHATE DEHYDROGENASE"/>
    <property type="match status" value="1"/>
</dbReference>
<dbReference type="PANTHER" id="PTHR11728:SF1">
    <property type="entry name" value="GLYCEROL-3-PHOSPHATE DEHYDROGENASE [NAD(+)] 2, CHLOROPLASTIC"/>
    <property type="match status" value="1"/>
</dbReference>
<dbReference type="Pfam" id="PF07479">
    <property type="entry name" value="NAD_Gly3P_dh_C"/>
    <property type="match status" value="1"/>
</dbReference>
<dbReference type="Pfam" id="PF01210">
    <property type="entry name" value="NAD_Gly3P_dh_N"/>
    <property type="match status" value="1"/>
</dbReference>
<dbReference type="PIRSF" id="PIRSF000114">
    <property type="entry name" value="Glycerol-3-P_dh"/>
    <property type="match status" value="1"/>
</dbReference>
<dbReference type="PRINTS" id="PR00077">
    <property type="entry name" value="GPDHDRGNASE"/>
</dbReference>
<dbReference type="SUPFAM" id="SSF48179">
    <property type="entry name" value="6-phosphogluconate dehydrogenase C-terminal domain-like"/>
    <property type="match status" value="1"/>
</dbReference>
<dbReference type="SUPFAM" id="SSF51735">
    <property type="entry name" value="NAD(P)-binding Rossmann-fold domains"/>
    <property type="match status" value="1"/>
</dbReference>
<dbReference type="PROSITE" id="PS00957">
    <property type="entry name" value="NAD_G3PDH"/>
    <property type="match status" value="1"/>
</dbReference>